<keyword id="KW-1185">Reference proteome</keyword>
<name>Y2557_MYCTO</name>
<gene>
    <name type="ordered locus">MT2634</name>
</gene>
<dbReference type="EMBL" id="AE000516">
    <property type="protein sequence ID" value="AAK46946.1"/>
    <property type="molecule type" value="Genomic_DNA"/>
</dbReference>
<dbReference type="PIR" id="A70728">
    <property type="entry name" value="A70728"/>
</dbReference>
<dbReference type="SMR" id="P9WLA4"/>
<dbReference type="KEGG" id="mtc:MT2634"/>
<dbReference type="PATRIC" id="fig|83331.31.peg.2840"/>
<dbReference type="HOGENOM" id="CLU_088918_0_0_11"/>
<dbReference type="Proteomes" id="UP000001020">
    <property type="component" value="Chromosome"/>
</dbReference>
<dbReference type="Gene3D" id="3.30.70.100">
    <property type="match status" value="1"/>
</dbReference>
<dbReference type="InterPro" id="IPR007138">
    <property type="entry name" value="ABM_dom"/>
</dbReference>
<dbReference type="InterPro" id="IPR011008">
    <property type="entry name" value="Dimeric_a/b-barrel"/>
</dbReference>
<dbReference type="Pfam" id="PF03992">
    <property type="entry name" value="ABM"/>
    <property type="match status" value="1"/>
</dbReference>
<dbReference type="SUPFAM" id="SSF54909">
    <property type="entry name" value="Dimeric alpha+beta barrel"/>
    <property type="match status" value="2"/>
</dbReference>
<proteinExistence type="predicted"/>
<evidence type="ECO:0000305" key="1"/>
<sequence length="224" mass="24295">MTGGATGALPRTMKEGWIVYARSTTIQAQSECIDTGIAHVRDVVMPALQGMDGCIGVSLLVDRQSGRCIATSAWETAEAMHASREQVTPIRDRCAEMFGGTPAVEEWEIAAMHRDHRSAEGACVRATWVKVPADQVDQGIEYYKSSVLPQIEGLDGFCSASLLVDRTSGRAVSSATFDSFDAMERNRDQSNALKATSLREAGGEELDECEFELALAHLRVPELV</sequence>
<feature type="chain" id="PRO_0000427513" description="Uncharacterized protein MT2634">
    <location>
        <begin position="1"/>
        <end position="224"/>
    </location>
</feature>
<comment type="similarity">
    <text evidence="1">To M.tuberculosis Rv2558.</text>
</comment>
<organism>
    <name type="scientific">Mycobacterium tuberculosis (strain CDC 1551 / Oshkosh)</name>
    <dbReference type="NCBI Taxonomy" id="83331"/>
    <lineage>
        <taxon>Bacteria</taxon>
        <taxon>Bacillati</taxon>
        <taxon>Actinomycetota</taxon>
        <taxon>Actinomycetes</taxon>
        <taxon>Mycobacteriales</taxon>
        <taxon>Mycobacteriaceae</taxon>
        <taxon>Mycobacterium</taxon>
        <taxon>Mycobacterium tuberculosis complex</taxon>
    </lineage>
</organism>
<accession>P9WLA4</accession>
<accession>L0TCQ7</accession>
<accession>P65003</accession>
<accession>Q50741</accession>
<reference key="1">
    <citation type="journal article" date="2002" name="J. Bacteriol.">
        <title>Whole-genome comparison of Mycobacterium tuberculosis clinical and laboratory strains.</title>
        <authorList>
            <person name="Fleischmann R.D."/>
            <person name="Alland D."/>
            <person name="Eisen J.A."/>
            <person name="Carpenter L."/>
            <person name="White O."/>
            <person name="Peterson J.D."/>
            <person name="DeBoy R.T."/>
            <person name="Dodson R.J."/>
            <person name="Gwinn M.L."/>
            <person name="Haft D.H."/>
            <person name="Hickey E.K."/>
            <person name="Kolonay J.F."/>
            <person name="Nelson W.C."/>
            <person name="Umayam L.A."/>
            <person name="Ermolaeva M.D."/>
            <person name="Salzberg S.L."/>
            <person name="Delcher A."/>
            <person name="Utterback T.R."/>
            <person name="Weidman J.F."/>
            <person name="Khouri H.M."/>
            <person name="Gill J."/>
            <person name="Mikula A."/>
            <person name="Bishai W."/>
            <person name="Jacobs W.R. Jr."/>
            <person name="Venter J.C."/>
            <person name="Fraser C.M."/>
        </authorList>
    </citation>
    <scope>NUCLEOTIDE SEQUENCE [LARGE SCALE GENOMIC DNA]</scope>
    <source>
        <strain>CDC 1551 / Oshkosh</strain>
    </source>
</reference>
<protein>
    <recommendedName>
        <fullName>Uncharacterized protein MT2634</fullName>
    </recommendedName>
</protein>